<gene>
    <name type="ordered locus">At1g47317</name>
    <name type="ORF">T3F24</name>
</gene>
<protein>
    <recommendedName>
        <fullName>Defensin-like protein 289</fullName>
    </recommendedName>
</protein>
<accession>Q2V4I2</accession>
<evidence type="ECO:0000250" key="1"/>
<evidence type="ECO:0000255" key="2"/>
<evidence type="ECO:0000305" key="3"/>
<sequence length="103" mass="11632">MATLKTTIFIIFILYISCTMFVNIFRVQADASCLTTKECVVRCSDEDAQCIHGECHCPHLKVDIEPTKAIRCKTDLDCPDPHQCPKYDYYACLNNGECTCISV</sequence>
<reference key="1">
    <citation type="journal article" date="2000" name="Nature">
        <title>Sequence and analysis of chromosome 1 of the plant Arabidopsis thaliana.</title>
        <authorList>
            <person name="Theologis A."/>
            <person name="Ecker J.R."/>
            <person name="Palm C.J."/>
            <person name="Federspiel N.A."/>
            <person name="Kaul S."/>
            <person name="White O."/>
            <person name="Alonso J."/>
            <person name="Altafi H."/>
            <person name="Araujo R."/>
            <person name="Bowman C.L."/>
            <person name="Brooks S.Y."/>
            <person name="Buehler E."/>
            <person name="Chan A."/>
            <person name="Chao Q."/>
            <person name="Chen H."/>
            <person name="Cheuk R.F."/>
            <person name="Chin C.W."/>
            <person name="Chung M.K."/>
            <person name="Conn L."/>
            <person name="Conway A.B."/>
            <person name="Conway A.R."/>
            <person name="Creasy T.H."/>
            <person name="Dewar K."/>
            <person name="Dunn P."/>
            <person name="Etgu P."/>
            <person name="Feldblyum T.V."/>
            <person name="Feng J.-D."/>
            <person name="Fong B."/>
            <person name="Fujii C.Y."/>
            <person name="Gill J.E."/>
            <person name="Goldsmith A.D."/>
            <person name="Haas B."/>
            <person name="Hansen N.F."/>
            <person name="Hughes B."/>
            <person name="Huizar L."/>
            <person name="Hunter J.L."/>
            <person name="Jenkins J."/>
            <person name="Johnson-Hopson C."/>
            <person name="Khan S."/>
            <person name="Khaykin E."/>
            <person name="Kim C.J."/>
            <person name="Koo H.L."/>
            <person name="Kremenetskaia I."/>
            <person name="Kurtz D.B."/>
            <person name="Kwan A."/>
            <person name="Lam B."/>
            <person name="Langin-Hooper S."/>
            <person name="Lee A."/>
            <person name="Lee J.M."/>
            <person name="Lenz C.A."/>
            <person name="Li J.H."/>
            <person name="Li Y.-P."/>
            <person name="Lin X."/>
            <person name="Liu S.X."/>
            <person name="Liu Z.A."/>
            <person name="Luros J.S."/>
            <person name="Maiti R."/>
            <person name="Marziali A."/>
            <person name="Militscher J."/>
            <person name="Miranda M."/>
            <person name="Nguyen M."/>
            <person name="Nierman W.C."/>
            <person name="Osborne B.I."/>
            <person name="Pai G."/>
            <person name="Peterson J."/>
            <person name="Pham P.K."/>
            <person name="Rizzo M."/>
            <person name="Rooney T."/>
            <person name="Rowley D."/>
            <person name="Sakano H."/>
            <person name="Salzberg S.L."/>
            <person name="Schwartz J.R."/>
            <person name="Shinn P."/>
            <person name="Southwick A.M."/>
            <person name="Sun H."/>
            <person name="Tallon L.J."/>
            <person name="Tambunga G."/>
            <person name="Toriumi M.J."/>
            <person name="Town C.D."/>
            <person name="Utterback T."/>
            <person name="Van Aken S."/>
            <person name="Vaysberg M."/>
            <person name="Vysotskaia V.S."/>
            <person name="Walker M."/>
            <person name="Wu D."/>
            <person name="Yu G."/>
            <person name="Fraser C.M."/>
            <person name="Venter J.C."/>
            <person name="Davis R.W."/>
        </authorList>
    </citation>
    <scope>NUCLEOTIDE SEQUENCE [LARGE SCALE GENOMIC DNA]</scope>
    <source>
        <strain>cv. Columbia</strain>
    </source>
</reference>
<reference key="2">
    <citation type="journal article" date="2017" name="Plant J.">
        <title>Araport11: a complete reannotation of the Arabidopsis thaliana reference genome.</title>
        <authorList>
            <person name="Cheng C.Y."/>
            <person name="Krishnakumar V."/>
            <person name="Chan A.P."/>
            <person name="Thibaud-Nissen F."/>
            <person name="Schobel S."/>
            <person name="Town C.D."/>
        </authorList>
    </citation>
    <scope>GENOME REANNOTATION</scope>
    <source>
        <strain>cv. Columbia</strain>
    </source>
</reference>
<reference key="3">
    <citation type="journal article" date="2007" name="Plant J.">
        <title>Small cysteine-rich peptides resembling antimicrobial peptides have been under-predicted in plants.</title>
        <authorList>
            <person name="Silverstein K.A.T."/>
            <person name="Moskal W.A. Jr."/>
            <person name="Wu H.C."/>
            <person name="Underwood B.A."/>
            <person name="Graham M.A."/>
            <person name="Town C.D."/>
            <person name="VandenBosch K.A."/>
        </authorList>
    </citation>
    <scope>NUCLEOTIDE SEQUENCE [LARGE SCALE MRNA] OF 30-103</scope>
    <source>
        <strain>cv. Columbia</strain>
    </source>
</reference>
<reference key="4">
    <citation type="journal article" date="2005" name="Plant Physiol.">
        <title>Genome organization of more than 300 defensin-like genes in Arabidopsis.</title>
        <authorList>
            <person name="Silverstein K.A.T."/>
            <person name="Graham M.A."/>
            <person name="Paape T.D."/>
            <person name="VandenBosch K.A."/>
        </authorList>
    </citation>
    <scope>GENE FAMILY</scope>
</reference>
<feature type="signal peptide" evidence="2">
    <location>
        <begin position="1"/>
        <end position="29"/>
    </location>
</feature>
<feature type="chain" id="PRO_0000379749" description="Defensin-like protein 289">
    <location>
        <begin position="30"/>
        <end position="103"/>
    </location>
</feature>
<feature type="disulfide bond" evidence="1">
    <location>
        <begin position="33"/>
        <end position="50"/>
    </location>
</feature>
<feature type="disulfide bond" evidence="1">
    <location>
        <begin position="39"/>
        <end position="55"/>
    </location>
</feature>
<feature type="disulfide bond" evidence="1">
    <location>
        <begin position="43"/>
        <end position="57"/>
    </location>
</feature>
<feature type="disulfide bond" evidence="1">
    <location>
        <begin position="72"/>
        <end position="92"/>
    </location>
</feature>
<feature type="disulfide bond" evidence="1">
    <location>
        <begin position="78"/>
        <end position="98"/>
    </location>
</feature>
<feature type="disulfide bond" evidence="1">
    <location>
        <begin position="84"/>
        <end position="100"/>
    </location>
</feature>
<proteinExistence type="inferred from homology"/>
<keyword id="KW-0929">Antimicrobial</keyword>
<keyword id="KW-1015">Disulfide bond</keyword>
<keyword id="KW-0295">Fungicide</keyword>
<keyword id="KW-0611">Plant defense</keyword>
<keyword id="KW-1185">Reference proteome</keyword>
<keyword id="KW-0964">Secreted</keyword>
<keyword id="KW-0732">Signal</keyword>
<organism>
    <name type="scientific">Arabidopsis thaliana</name>
    <name type="common">Mouse-ear cress</name>
    <dbReference type="NCBI Taxonomy" id="3702"/>
    <lineage>
        <taxon>Eukaryota</taxon>
        <taxon>Viridiplantae</taxon>
        <taxon>Streptophyta</taxon>
        <taxon>Embryophyta</taxon>
        <taxon>Tracheophyta</taxon>
        <taxon>Spermatophyta</taxon>
        <taxon>Magnoliopsida</taxon>
        <taxon>eudicotyledons</taxon>
        <taxon>Gunneridae</taxon>
        <taxon>Pentapetalae</taxon>
        <taxon>rosids</taxon>
        <taxon>malvids</taxon>
        <taxon>Brassicales</taxon>
        <taxon>Brassicaceae</taxon>
        <taxon>Camelineae</taxon>
        <taxon>Arabidopsis</taxon>
    </lineage>
</organism>
<dbReference type="EMBL" id="AC015449">
    <property type="status" value="NOT_ANNOTATED_CDS"/>
    <property type="molecule type" value="Genomic_DNA"/>
</dbReference>
<dbReference type="EMBL" id="CP002684">
    <property type="protein sequence ID" value="AEE32156.1"/>
    <property type="molecule type" value="Genomic_DNA"/>
</dbReference>
<dbReference type="EMBL" id="EF182840">
    <property type="status" value="NOT_ANNOTATED_CDS"/>
    <property type="molecule type" value="mRNA"/>
</dbReference>
<dbReference type="RefSeq" id="NP_001031152.1">
    <property type="nucleotide sequence ID" value="NM_001036075.1"/>
</dbReference>
<dbReference type="SMR" id="Q2V4I2"/>
<dbReference type="PaxDb" id="3702-AT1G47317.1"/>
<dbReference type="EnsemblPlants" id="AT1G47317.1">
    <property type="protein sequence ID" value="AT1G47317.1"/>
    <property type="gene ID" value="AT1G47317"/>
</dbReference>
<dbReference type="GeneID" id="3767374"/>
<dbReference type="Gramene" id="AT1G47317.1">
    <property type="protein sequence ID" value="AT1G47317.1"/>
    <property type="gene ID" value="AT1G47317"/>
</dbReference>
<dbReference type="KEGG" id="ath:AT1G47317"/>
<dbReference type="Araport" id="AT1G47317"/>
<dbReference type="TAIR" id="AT1G47317"/>
<dbReference type="eggNOG" id="KOG1075">
    <property type="taxonomic scope" value="Eukaryota"/>
</dbReference>
<dbReference type="HOGENOM" id="CLU_179561_0_0_1"/>
<dbReference type="InParanoid" id="Q2V4I2"/>
<dbReference type="OMA" id="EDAQCIH"/>
<dbReference type="PhylomeDB" id="Q2V4I2"/>
<dbReference type="PRO" id="PR:Q2V4I2"/>
<dbReference type="Proteomes" id="UP000006548">
    <property type="component" value="Chromosome 1"/>
</dbReference>
<dbReference type="ExpressionAtlas" id="Q2V4I2">
    <property type="expression patterns" value="baseline"/>
</dbReference>
<dbReference type="GO" id="GO:0005576">
    <property type="term" value="C:extracellular region"/>
    <property type="evidence" value="ECO:0007669"/>
    <property type="project" value="UniProtKB-SubCell"/>
</dbReference>
<dbReference type="GO" id="GO:0050832">
    <property type="term" value="P:defense response to fungus"/>
    <property type="evidence" value="ECO:0007669"/>
    <property type="project" value="UniProtKB-KW"/>
</dbReference>
<dbReference type="GO" id="GO:0031640">
    <property type="term" value="P:killing of cells of another organism"/>
    <property type="evidence" value="ECO:0007669"/>
    <property type="project" value="UniProtKB-KW"/>
</dbReference>
<name>DF289_ARATH</name>
<comment type="subcellular location">
    <subcellularLocation>
        <location evidence="1">Secreted</location>
    </subcellularLocation>
</comment>
<comment type="similarity">
    <text evidence="3">Belongs to the DEFL family.</text>
</comment>
<comment type="caution">
    <text evidence="3">Contains 6 disulfide bonds instead of the 4 disulfide bonds, which are conserved features of the family.</text>
</comment>